<accession>Q6GIK9</accession>
<reference key="1">
    <citation type="journal article" date="2004" name="Proc. Natl. Acad. Sci. U.S.A.">
        <title>Complete genomes of two clinical Staphylococcus aureus strains: evidence for the rapid evolution of virulence and drug resistance.</title>
        <authorList>
            <person name="Holden M.T.G."/>
            <person name="Feil E.J."/>
            <person name="Lindsay J.A."/>
            <person name="Peacock S.J."/>
            <person name="Day N.P.J."/>
            <person name="Enright M.C."/>
            <person name="Foster T.J."/>
            <person name="Moore C.E."/>
            <person name="Hurst L."/>
            <person name="Atkin R."/>
            <person name="Barron A."/>
            <person name="Bason N."/>
            <person name="Bentley S.D."/>
            <person name="Chillingworth C."/>
            <person name="Chillingworth T."/>
            <person name="Churcher C."/>
            <person name="Clark L."/>
            <person name="Corton C."/>
            <person name="Cronin A."/>
            <person name="Doggett J."/>
            <person name="Dowd L."/>
            <person name="Feltwell T."/>
            <person name="Hance Z."/>
            <person name="Harris B."/>
            <person name="Hauser H."/>
            <person name="Holroyd S."/>
            <person name="Jagels K."/>
            <person name="James K.D."/>
            <person name="Lennard N."/>
            <person name="Line A."/>
            <person name="Mayes R."/>
            <person name="Moule S."/>
            <person name="Mungall K."/>
            <person name="Ormond D."/>
            <person name="Quail M.A."/>
            <person name="Rabbinowitsch E."/>
            <person name="Rutherford K.M."/>
            <person name="Sanders M."/>
            <person name="Sharp S."/>
            <person name="Simmonds M."/>
            <person name="Stevens K."/>
            <person name="Whitehead S."/>
            <person name="Barrell B.G."/>
            <person name="Spratt B.G."/>
            <person name="Parkhill J."/>
        </authorList>
    </citation>
    <scope>NUCLEOTIDE SEQUENCE [LARGE SCALE GENOMIC DNA]</scope>
    <source>
        <strain>MRSA252</strain>
    </source>
</reference>
<name>SSRP_STAAR</name>
<sequence>MAKKKSPGTLAENRKARHDYNIEDTIEAGIVLQGTEIKSIRRGSANLKDSYAQVKNGEMYLNNMHIAPYEEGNRFNHDPLRSRKLLLHKREIIKLGDQTREIGYSIVPLKLYLKHGHCKVLLGVARGKKKYDKRQALKEKAVKRDVARDMKARY</sequence>
<dbReference type="EMBL" id="BX571856">
    <property type="protein sequence ID" value="CAG39846.1"/>
    <property type="molecule type" value="Genomic_DNA"/>
</dbReference>
<dbReference type="RefSeq" id="WP_001085185.1">
    <property type="nucleotide sequence ID" value="NC_002952.2"/>
</dbReference>
<dbReference type="SMR" id="Q6GIK9"/>
<dbReference type="KEGG" id="sar:SAR0837"/>
<dbReference type="HOGENOM" id="CLU_108953_0_0_9"/>
<dbReference type="Proteomes" id="UP000000596">
    <property type="component" value="Chromosome"/>
</dbReference>
<dbReference type="GO" id="GO:0005829">
    <property type="term" value="C:cytosol"/>
    <property type="evidence" value="ECO:0007669"/>
    <property type="project" value="TreeGrafter"/>
</dbReference>
<dbReference type="GO" id="GO:0003723">
    <property type="term" value="F:RNA binding"/>
    <property type="evidence" value="ECO:0007669"/>
    <property type="project" value="UniProtKB-UniRule"/>
</dbReference>
<dbReference type="GO" id="GO:0070929">
    <property type="term" value="P:trans-translation"/>
    <property type="evidence" value="ECO:0007669"/>
    <property type="project" value="UniProtKB-UniRule"/>
</dbReference>
<dbReference type="CDD" id="cd09294">
    <property type="entry name" value="SmpB"/>
    <property type="match status" value="1"/>
</dbReference>
<dbReference type="Gene3D" id="2.40.280.10">
    <property type="match status" value="1"/>
</dbReference>
<dbReference type="HAMAP" id="MF_00023">
    <property type="entry name" value="SmpB"/>
    <property type="match status" value="1"/>
</dbReference>
<dbReference type="InterPro" id="IPR023620">
    <property type="entry name" value="SmpB"/>
</dbReference>
<dbReference type="InterPro" id="IPR000037">
    <property type="entry name" value="SsrA-bd_prot"/>
</dbReference>
<dbReference type="InterPro" id="IPR020081">
    <property type="entry name" value="SsrA-bd_prot_CS"/>
</dbReference>
<dbReference type="NCBIfam" id="NF003843">
    <property type="entry name" value="PRK05422.1"/>
    <property type="match status" value="1"/>
</dbReference>
<dbReference type="NCBIfam" id="TIGR00086">
    <property type="entry name" value="smpB"/>
    <property type="match status" value="1"/>
</dbReference>
<dbReference type="PANTHER" id="PTHR30308:SF2">
    <property type="entry name" value="SSRA-BINDING PROTEIN"/>
    <property type="match status" value="1"/>
</dbReference>
<dbReference type="PANTHER" id="PTHR30308">
    <property type="entry name" value="TMRNA-BINDING COMPONENT OF TRANS-TRANSLATION TAGGING COMPLEX"/>
    <property type="match status" value="1"/>
</dbReference>
<dbReference type="Pfam" id="PF01668">
    <property type="entry name" value="SmpB"/>
    <property type="match status" value="1"/>
</dbReference>
<dbReference type="SUPFAM" id="SSF74982">
    <property type="entry name" value="Small protein B (SmpB)"/>
    <property type="match status" value="1"/>
</dbReference>
<dbReference type="PROSITE" id="PS01317">
    <property type="entry name" value="SSRP"/>
    <property type="match status" value="1"/>
</dbReference>
<gene>
    <name evidence="1" type="primary">smpB</name>
    <name type="ordered locus">SAR0837</name>
</gene>
<feature type="chain" id="PRO_0000103031" description="SsrA-binding protein">
    <location>
        <begin position="1"/>
        <end position="154"/>
    </location>
</feature>
<organism>
    <name type="scientific">Staphylococcus aureus (strain MRSA252)</name>
    <dbReference type="NCBI Taxonomy" id="282458"/>
    <lineage>
        <taxon>Bacteria</taxon>
        <taxon>Bacillati</taxon>
        <taxon>Bacillota</taxon>
        <taxon>Bacilli</taxon>
        <taxon>Bacillales</taxon>
        <taxon>Staphylococcaceae</taxon>
        <taxon>Staphylococcus</taxon>
    </lineage>
</organism>
<protein>
    <recommendedName>
        <fullName evidence="1">SsrA-binding protein</fullName>
    </recommendedName>
    <alternativeName>
        <fullName evidence="1">Small protein B</fullName>
    </alternativeName>
</protein>
<proteinExistence type="inferred from homology"/>
<comment type="function">
    <text evidence="1">Required for rescue of stalled ribosomes mediated by trans-translation. Binds to transfer-messenger RNA (tmRNA), required for stable association of tmRNA with ribosomes. tmRNA and SmpB together mimic tRNA shape, replacing the anticodon stem-loop with SmpB. tmRNA is encoded by the ssrA gene; the 2 termini fold to resemble tRNA(Ala) and it encodes a 'tag peptide', a short internal open reading frame. During trans-translation Ala-aminoacylated tmRNA acts like a tRNA, entering the A-site of stalled ribosomes, displacing the stalled mRNA. The ribosome then switches to translate the ORF on the tmRNA; the nascent peptide is terminated with the 'tag peptide' encoded by the tmRNA and targeted for degradation. The ribosome is freed to recommence translation, which seems to be the essential function of trans-translation.</text>
</comment>
<comment type="subcellular location">
    <subcellularLocation>
        <location evidence="1">Cytoplasm</location>
    </subcellularLocation>
    <text evidence="1">The tmRNA-SmpB complex associates with stalled 70S ribosomes.</text>
</comment>
<comment type="similarity">
    <text evidence="1">Belongs to the SmpB family.</text>
</comment>
<keyword id="KW-0963">Cytoplasm</keyword>
<keyword id="KW-0694">RNA-binding</keyword>
<evidence type="ECO:0000255" key="1">
    <source>
        <dbReference type="HAMAP-Rule" id="MF_00023"/>
    </source>
</evidence>